<keyword id="KW-0012">Acyltransferase</keyword>
<keyword id="KW-0028">Amino-acid biosynthesis</keyword>
<keyword id="KW-0963">Cytoplasm</keyword>
<keyword id="KW-0220">Diaminopimelate biosynthesis</keyword>
<keyword id="KW-0457">Lysine biosynthesis</keyword>
<keyword id="KW-0677">Repeat</keyword>
<keyword id="KW-0808">Transferase</keyword>
<reference key="1">
    <citation type="journal article" date="2008" name="BMC Genomics">
        <title>The missing link: Bordetella petrii is endowed with both the metabolic versatility of environmental bacteria and virulence traits of pathogenic Bordetellae.</title>
        <authorList>
            <person name="Gross R."/>
            <person name="Guzman C.A."/>
            <person name="Sebaihia M."/>
            <person name="Martin dos Santos V.A.P."/>
            <person name="Pieper D.H."/>
            <person name="Koebnik R."/>
            <person name="Lechner M."/>
            <person name="Bartels D."/>
            <person name="Buhrmester J."/>
            <person name="Choudhuri J.V."/>
            <person name="Ebensen T."/>
            <person name="Gaigalat L."/>
            <person name="Herrmann S."/>
            <person name="Khachane A.N."/>
            <person name="Larisch C."/>
            <person name="Link S."/>
            <person name="Linke B."/>
            <person name="Meyer F."/>
            <person name="Mormann S."/>
            <person name="Nakunst D."/>
            <person name="Rueckert C."/>
            <person name="Schneiker-Bekel S."/>
            <person name="Schulze K."/>
            <person name="Voerholter F.-J."/>
            <person name="Yevsa T."/>
            <person name="Engle J.T."/>
            <person name="Goldman W.E."/>
            <person name="Puehler A."/>
            <person name="Goebel U.B."/>
            <person name="Goesmann A."/>
            <person name="Bloecker H."/>
            <person name="Kaiser O."/>
            <person name="Martinez-Arias R."/>
        </authorList>
    </citation>
    <scope>NUCLEOTIDE SEQUENCE [LARGE SCALE GENOMIC DNA]</scope>
    <source>
        <strain>ATCC BAA-461 / DSM 12804 / CCUG 43448</strain>
    </source>
</reference>
<sequence length="273" mass="29402">MTLDLQTTIENAWENRTNLSPVDATAEVREAVEQTIAALDLGRLRVAEKTEAGWIVHQWIKKAVLLSFRLQDNAIMGQAPMQFYDKVPLKFAEYGDTAFQHGGYRVVPPAVARRGAFIARNVVLMPSYVNIGAYVDEGTMVDTWATVGSCAQIGKNVHLSGGVGIGGVLEPLQANPTIIEDNCFIGARSEVVEGVVVEENSVLAMGVFLSQSTKIYDRATGKVTYGRVPSGSVVVPGSLPSEDGSHSLVCAVIVKRVDAQTRAKTSINDLLRA</sequence>
<organism>
    <name type="scientific">Bordetella petrii (strain ATCC BAA-461 / DSM 12804 / CCUG 43448)</name>
    <dbReference type="NCBI Taxonomy" id="340100"/>
    <lineage>
        <taxon>Bacteria</taxon>
        <taxon>Pseudomonadati</taxon>
        <taxon>Pseudomonadota</taxon>
        <taxon>Betaproteobacteria</taxon>
        <taxon>Burkholderiales</taxon>
        <taxon>Alcaligenaceae</taxon>
        <taxon>Bordetella</taxon>
    </lineage>
</organism>
<feature type="chain" id="PRO_1000134029" description="2,3,4,5-tetrahydropyridine-2,6-dicarboxylate N-succinyltransferase">
    <location>
        <begin position="1"/>
        <end position="273"/>
    </location>
</feature>
<evidence type="ECO:0000255" key="1">
    <source>
        <dbReference type="HAMAP-Rule" id="MF_00811"/>
    </source>
</evidence>
<proteinExistence type="inferred from homology"/>
<name>DAPD_BORPD</name>
<gene>
    <name evidence="1" type="primary">dapD</name>
    <name type="ordered locus">Bpet2799</name>
</gene>
<accession>A9IR78</accession>
<protein>
    <recommendedName>
        <fullName evidence="1">2,3,4,5-tetrahydropyridine-2,6-dicarboxylate N-succinyltransferase</fullName>
        <ecNumber evidence="1">2.3.1.117</ecNumber>
    </recommendedName>
    <alternativeName>
        <fullName evidence="1">Tetrahydrodipicolinate N-succinyltransferase</fullName>
        <shortName evidence="1">THP succinyltransferase</shortName>
        <shortName evidence="1">Tetrahydropicolinate succinylase</shortName>
    </alternativeName>
</protein>
<dbReference type="EC" id="2.3.1.117" evidence="1"/>
<dbReference type="EMBL" id="AM902716">
    <property type="protein sequence ID" value="CAP43141.1"/>
    <property type="molecule type" value="Genomic_DNA"/>
</dbReference>
<dbReference type="SMR" id="A9IR78"/>
<dbReference type="STRING" id="94624.Bpet2799"/>
<dbReference type="KEGG" id="bpt:Bpet2799"/>
<dbReference type="eggNOG" id="COG2171">
    <property type="taxonomic scope" value="Bacteria"/>
</dbReference>
<dbReference type="UniPathway" id="UPA00034">
    <property type="reaction ID" value="UER00019"/>
</dbReference>
<dbReference type="Proteomes" id="UP000001225">
    <property type="component" value="Chromosome"/>
</dbReference>
<dbReference type="GO" id="GO:0005737">
    <property type="term" value="C:cytoplasm"/>
    <property type="evidence" value="ECO:0007669"/>
    <property type="project" value="UniProtKB-SubCell"/>
</dbReference>
<dbReference type="GO" id="GO:0008666">
    <property type="term" value="F:2,3,4,5-tetrahydropyridine-2,6-dicarboxylate N-succinyltransferase activity"/>
    <property type="evidence" value="ECO:0007669"/>
    <property type="project" value="UniProtKB-UniRule"/>
</dbReference>
<dbReference type="GO" id="GO:0016779">
    <property type="term" value="F:nucleotidyltransferase activity"/>
    <property type="evidence" value="ECO:0007669"/>
    <property type="project" value="TreeGrafter"/>
</dbReference>
<dbReference type="GO" id="GO:0019877">
    <property type="term" value="P:diaminopimelate biosynthetic process"/>
    <property type="evidence" value="ECO:0007669"/>
    <property type="project" value="UniProtKB-UniRule"/>
</dbReference>
<dbReference type="GO" id="GO:0009089">
    <property type="term" value="P:lysine biosynthetic process via diaminopimelate"/>
    <property type="evidence" value="ECO:0007669"/>
    <property type="project" value="UniProtKB-UniRule"/>
</dbReference>
<dbReference type="CDD" id="cd03350">
    <property type="entry name" value="LbH_THP_succinylT"/>
    <property type="match status" value="1"/>
</dbReference>
<dbReference type="Gene3D" id="2.160.10.10">
    <property type="entry name" value="Hexapeptide repeat proteins"/>
    <property type="match status" value="1"/>
</dbReference>
<dbReference type="Gene3D" id="1.10.166.10">
    <property type="entry name" value="Tetrahydrodipicolinate-N-succinyltransferase, N-terminal domain"/>
    <property type="match status" value="1"/>
</dbReference>
<dbReference type="HAMAP" id="MF_00811">
    <property type="entry name" value="DapD"/>
    <property type="match status" value="1"/>
</dbReference>
<dbReference type="InterPro" id="IPR005664">
    <property type="entry name" value="DapD_Trfase_Hexpep_rpt_fam"/>
</dbReference>
<dbReference type="InterPro" id="IPR001451">
    <property type="entry name" value="Hexapep"/>
</dbReference>
<dbReference type="InterPro" id="IPR018357">
    <property type="entry name" value="Hexapep_transf_CS"/>
</dbReference>
<dbReference type="InterPro" id="IPR023180">
    <property type="entry name" value="THP_succinylTrfase_dom1"/>
</dbReference>
<dbReference type="InterPro" id="IPR037133">
    <property type="entry name" value="THP_succinylTrfase_N_sf"/>
</dbReference>
<dbReference type="InterPro" id="IPR011004">
    <property type="entry name" value="Trimer_LpxA-like_sf"/>
</dbReference>
<dbReference type="NCBIfam" id="TIGR00965">
    <property type="entry name" value="dapD"/>
    <property type="match status" value="1"/>
</dbReference>
<dbReference type="NCBIfam" id="NF008808">
    <property type="entry name" value="PRK11830.1"/>
    <property type="match status" value="1"/>
</dbReference>
<dbReference type="PANTHER" id="PTHR19136:SF52">
    <property type="entry name" value="2,3,4,5-TETRAHYDROPYRIDINE-2,6-DICARBOXYLATE N-SUCCINYLTRANSFERASE"/>
    <property type="match status" value="1"/>
</dbReference>
<dbReference type="PANTHER" id="PTHR19136">
    <property type="entry name" value="MOLYBDENUM COFACTOR GUANYLYLTRANSFERASE"/>
    <property type="match status" value="1"/>
</dbReference>
<dbReference type="Pfam" id="PF14602">
    <property type="entry name" value="Hexapep_2"/>
    <property type="match status" value="1"/>
</dbReference>
<dbReference type="Pfam" id="PF14805">
    <property type="entry name" value="THDPS_N_2"/>
    <property type="match status" value="1"/>
</dbReference>
<dbReference type="SUPFAM" id="SSF51161">
    <property type="entry name" value="Trimeric LpxA-like enzymes"/>
    <property type="match status" value="1"/>
</dbReference>
<dbReference type="PROSITE" id="PS00101">
    <property type="entry name" value="HEXAPEP_TRANSFERASES"/>
    <property type="match status" value="1"/>
</dbReference>
<comment type="catalytic activity">
    <reaction evidence="1">
        <text>(S)-2,3,4,5-tetrahydrodipicolinate + succinyl-CoA + H2O = (S)-2-succinylamino-6-oxoheptanedioate + CoA</text>
        <dbReference type="Rhea" id="RHEA:17325"/>
        <dbReference type="ChEBI" id="CHEBI:15377"/>
        <dbReference type="ChEBI" id="CHEBI:15685"/>
        <dbReference type="ChEBI" id="CHEBI:16845"/>
        <dbReference type="ChEBI" id="CHEBI:57287"/>
        <dbReference type="ChEBI" id="CHEBI:57292"/>
        <dbReference type="EC" id="2.3.1.117"/>
    </reaction>
</comment>
<comment type="pathway">
    <text evidence="1">Amino-acid biosynthesis; L-lysine biosynthesis via DAP pathway; LL-2,6-diaminopimelate from (S)-tetrahydrodipicolinate (succinylase route): step 1/3.</text>
</comment>
<comment type="subcellular location">
    <subcellularLocation>
        <location evidence="1">Cytoplasm</location>
    </subcellularLocation>
</comment>
<comment type="similarity">
    <text evidence="1">Belongs to the transferase hexapeptide repeat family.</text>
</comment>